<feature type="signal peptide" evidence="3">
    <location>
        <begin position="1"/>
        <end position="19"/>
    </location>
</feature>
<feature type="chain" id="PRO_0000240638" description="Lysozyme-like protein 4">
    <location>
        <begin position="20"/>
        <end position="146"/>
    </location>
</feature>
<feature type="domain" description="C-type lysozyme" evidence="4">
    <location>
        <begin position="20"/>
        <end position="146"/>
    </location>
</feature>
<feature type="active site" evidence="4">
    <location>
        <position position="54"/>
    </location>
</feature>
<feature type="disulfide bond" evidence="4">
    <location>
        <begin position="25"/>
        <end position="144"/>
    </location>
</feature>
<feature type="disulfide bond" evidence="4">
    <location>
        <begin position="49"/>
        <end position="131"/>
    </location>
</feature>
<feature type="disulfide bond" evidence="4">
    <location>
        <begin position="84"/>
        <end position="96"/>
    </location>
</feature>
<feature type="disulfide bond" evidence="4">
    <location>
        <begin position="92"/>
        <end position="110"/>
    </location>
</feature>
<name>LYZL4_HUMAN</name>
<reference key="1">
    <citation type="journal article" date="2005" name="Biol. Reprod.">
        <title>Molecular cloning and characterization of three novel lysozyme-like genes, predominantly expressed in the male reproductive system of humans, belonging to the c-type lysozyme/alpha-lactalbumin family.</title>
        <authorList>
            <person name="Zhang K."/>
            <person name="Gao R."/>
            <person name="Zhang H."/>
            <person name="Cai X."/>
            <person name="Shen C."/>
            <person name="Wu C."/>
            <person name="Zhao S."/>
            <person name="Yu L."/>
        </authorList>
    </citation>
    <scope>NUCLEOTIDE SEQUENCE [MRNA]</scope>
    <scope>TISSUE SPECIFICITY</scope>
    <source>
        <tissue>Testis</tissue>
    </source>
</reference>
<reference key="2">
    <citation type="journal article" date="2004" name="Genome Res.">
        <title>The status, quality, and expansion of the NIH full-length cDNA project: the Mammalian Gene Collection (MGC).</title>
        <authorList>
            <consortium name="The MGC Project Team"/>
        </authorList>
    </citation>
    <scope>NUCLEOTIDE SEQUENCE [LARGE SCALE MRNA]</scope>
    <source>
        <tissue>Testis</tissue>
    </source>
</reference>
<reference key="3">
    <citation type="journal article" date="2006" name="Nature">
        <title>The DNA sequence, annotation and analysis of human chromosome 3.</title>
        <authorList>
            <person name="Muzny D.M."/>
            <person name="Scherer S.E."/>
            <person name="Kaul R."/>
            <person name="Wang J."/>
            <person name="Yu J."/>
            <person name="Sudbrak R."/>
            <person name="Buhay C.J."/>
            <person name="Chen R."/>
            <person name="Cree A."/>
            <person name="Ding Y."/>
            <person name="Dugan-Rocha S."/>
            <person name="Gill R."/>
            <person name="Gunaratne P."/>
            <person name="Harris R.A."/>
            <person name="Hawes A.C."/>
            <person name="Hernandez J."/>
            <person name="Hodgson A.V."/>
            <person name="Hume J."/>
            <person name="Jackson A."/>
            <person name="Khan Z.M."/>
            <person name="Kovar-Smith C."/>
            <person name="Lewis L.R."/>
            <person name="Lozado R.J."/>
            <person name="Metzker M.L."/>
            <person name="Milosavljevic A."/>
            <person name="Miner G.R."/>
            <person name="Morgan M.B."/>
            <person name="Nazareth L.V."/>
            <person name="Scott G."/>
            <person name="Sodergren E."/>
            <person name="Song X.-Z."/>
            <person name="Steffen D."/>
            <person name="Wei S."/>
            <person name="Wheeler D.A."/>
            <person name="Wright M.W."/>
            <person name="Worley K.C."/>
            <person name="Yuan Y."/>
            <person name="Zhang Z."/>
            <person name="Adams C.Q."/>
            <person name="Ansari-Lari M.A."/>
            <person name="Ayele M."/>
            <person name="Brown M.J."/>
            <person name="Chen G."/>
            <person name="Chen Z."/>
            <person name="Clendenning J."/>
            <person name="Clerc-Blankenburg K.P."/>
            <person name="Chen R."/>
            <person name="Chen Z."/>
            <person name="Davis C."/>
            <person name="Delgado O."/>
            <person name="Dinh H.H."/>
            <person name="Dong W."/>
            <person name="Draper H."/>
            <person name="Ernst S."/>
            <person name="Fu G."/>
            <person name="Gonzalez-Garay M.L."/>
            <person name="Garcia D.K."/>
            <person name="Gillett W."/>
            <person name="Gu J."/>
            <person name="Hao B."/>
            <person name="Haugen E."/>
            <person name="Havlak P."/>
            <person name="He X."/>
            <person name="Hennig S."/>
            <person name="Hu S."/>
            <person name="Huang W."/>
            <person name="Jackson L.R."/>
            <person name="Jacob L.S."/>
            <person name="Kelly S.H."/>
            <person name="Kube M."/>
            <person name="Levy R."/>
            <person name="Li Z."/>
            <person name="Liu B."/>
            <person name="Liu J."/>
            <person name="Liu W."/>
            <person name="Lu J."/>
            <person name="Maheshwari M."/>
            <person name="Nguyen B.-V."/>
            <person name="Okwuonu G.O."/>
            <person name="Palmeiri A."/>
            <person name="Pasternak S."/>
            <person name="Perez L.M."/>
            <person name="Phelps K.A."/>
            <person name="Plopper F.J."/>
            <person name="Qiang B."/>
            <person name="Raymond C."/>
            <person name="Rodriguez R."/>
            <person name="Saenphimmachak C."/>
            <person name="Santibanez J."/>
            <person name="Shen H."/>
            <person name="Shen Y."/>
            <person name="Subramanian S."/>
            <person name="Tabor P.E."/>
            <person name="Verduzco D."/>
            <person name="Waldron L."/>
            <person name="Wang J."/>
            <person name="Wang J."/>
            <person name="Wang Q."/>
            <person name="Williams G.A."/>
            <person name="Wong G.K.-S."/>
            <person name="Yao Z."/>
            <person name="Zhang J."/>
            <person name="Zhang X."/>
            <person name="Zhao G."/>
            <person name="Zhou J."/>
            <person name="Zhou Y."/>
            <person name="Nelson D."/>
            <person name="Lehrach H."/>
            <person name="Reinhardt R."/>
            <person name="Naylor S.L."/>
            <person name="Yang H."/>
            <person name="Olson M."/>
            <person name="Weinstock G."/>
            <person name="Gibbs R.A."/>
        </authorList>
    </citation>
    <scope>NUCLEOTIDE SEQUENCE [LARGE SCALE GENOMIC DNA]</scope>
</reference>
<evidence type="ECO:0000250" key="1">
    <source>
        <dbReference type="UniProtKB" id="D4ABW7"/>
    </source>
</evidence>
<evidence type="ECO:0000250" key="2">
    <source>
        <dbReference type="UniProtKB" id="Q9D925"/>
    </source>
</evidence>
<evidence type="ECO:0000255" key="3"/>
<evidence type="ECO:0000255" key="4">
    <source>
        <dbReference type="PROSITE-ProRule" id="PRU00680"/>
    </source>
</evidence>
<evidence type="ECO:0000269" key="5">
    <source>
    </source>
</evidence>
<evidence type="ECO:0000305" key="6"/>
<comment type="function">
    <text evidence="1 2">May be involved in fertilization (By similarity). Has no detectable bacteriolytic and lysozyme activities in vitro (By similarity).</text>
</comment>
<comment type="subunit">
    <text evidence="6">Monomer.</text>
</comment>
<comment type="subcellular location">
    <subcellularLocation>
        <location evidence="2">Secreted</location>
    </subcellularLocation>
    <subcellularLocation>
        <location evidence="2">Cytoplasmic vesicle</location>
        <location evidence="2">Secretory vesicle</location>
        <location evidence="2">Acrosome</location>
    </subcellularLocation>
    <subcellularLocation>
        <location evidence="2">Cell projection</location>
        <location evidence="2">Cilium</location>
        <location evidence="2">Flagellum</location>
    </subcellularLocation>
    <text evidence="2">Found in the principal piece of sperm tail.</text>
</comment>
<comment type="tissue specificity">
    <text evidence="5">Expressed in testis and epididymis.</text>
</comment>
<comment type="similarity">
    <text evidence="4">Belongs to the glycosyl hydrolase 22 family.</text>
</comment>
<comment type="caution">
    <text evidence="6">Although it belongs to the glycosyl hydrolase 22 family, Gly-72 is present instead of the conserved Asp which is an active site residue. It is therefore expected that this protein lacks hydrolase activity.</text>
</comment>
<gene>
    <name type="primary">LYZL4</name>
    <name type="synonym">LYC4</name>
</gene>
<protein>
    <recommendedName>
        <fullName>Lysozyme-like protein 4</fullName>
        <shortName>Lysozyme-4</shortName>
    </recommendedName>
</protein>
<proteinExistence type="evidence at protein level"/>
<accession>Q96KX0</accession>
<keyword id="KW-0966">Cell projection</keyword>
<keyword id="KW-0969">Cilium</keyword>
<keyword id="KW-0968">Cytoplasmic vesicle</keyword>
<keyword id="KW-1015">Disulfide bond</keyword>
<keyword id="KW-0278">Fertilization</keyword>
<keyword id="KW-0282">Flagellum</keyword>
<keyword id="KW-1267">Proteomics identification</keyword>
<keyword id="KW-1185">Reference proteome</keyword>
<keyword id="KW-0964">Secreted</keyword>
<keyword id="KW-0732">Signal</keyword>
<sequence>MKASVVLSLLGYLVVPSGAYILGRCTVAKKLHDGGLDYFEGYSLENWVCLAYFESKFNPMAIYENTREGYTGFGLFQMRGSDWCGDHGRNRCHMSCSALLNPNLEKTIKCAKTIVKGKEGMGAWPTWSRYCQYSDTLARWLDGCKL</sequence>
<dbReference type="EMBL" id="AF326749">
    <property type="protein sequence ID" value="AAO32946.1"/>
    <property type="molecule type" value="mRNA"/>
</dbReference>
<dbReference type="EMBL" id="AC092048">
    <property type="status" value="NOT_ANNOTATED_CDS"/>
    <property type="molecule type" value="Genomic_DNA"/>
</dbReference>
<dbReference type="EMBL" id="BC016747">
    <property type="protein sequence ID" value="AAH16747.1"/>
    <property type="molecule type" value="mRNA"/>
</dbReference>
<dbReference type="CCDS" id="CCDS2697.1"/>
<dbReference type="RefSeq" id="NP_001291315.1">
    <property type="nucleotide sequence ID" value="NM_001304386.2"/>
</dbReference>
<dbReference type="RefSeq" id="NP_653235.1">
    <property type="nucleotide sequence ID" value="NM_144634.4"/>
</dbReference>
<dbReference type="RefSeq" id="XP_016861194.1">
    <property type="nucleotide sequence ID" value="XM_017005705.1"/>
</dbReference>
<dbReference type="RefSeq" id="XP_016861195.1">
    <property type="nucleotide sequence ID" value="XM_017005706.1"/>
</dbReference>
<dbReference type="RefSeq" id="XP_054201188.1">
    <property type="nucleotide sequence ID" value="XM_054345213.1"/>
</dbReference>
<dbReference type="RefSeq" id="XP_054201189.1">
    <property type="nucleotide sequence ID" value="XM_054345214.1"/>
</dbReference>
<dbReference type="RefSeq" id="XP_054201191.1">
    <property type="nucleotide sequence ID" value="XM_054345216.1"/>
</dbReference>
<dbReference type="SMR" id="Q96KX0"/>
<dbReference type="BioGRID" id="126277">
    <property type="interactions" value="1"/>
</dbReference>
<dbReference type="FunCoup" id="Q96KX0">
    <property type="interactions" value="8"/>
</dbReference>
<dbReference type="IntAct" id="Q96KX0">
    <property type="interactions" value="1"/>
</dbReference>
<dbReference type="STRING" id="9606.ENSP00000287748"/>
<dbReference type="CAZy" id="GH22">
    <property type="family name" value="Glycoside Hydrolase Family 22"/>
</dbReference>
<dbReference type="iPTMnet" id="Q96KX0"/>
<dbReference type="PhosphoSitePlus" id="Q96KX0"/>
<dbReference type="BioMuta" id="LYZL4"/>
<dbReference type="DMDM" id="74732223"/>
<dbReference type="MassIVE" id="Q96KX0"/>
<dbReference type="PaxDb" id="9606-ENSP00000287748"/>
<dbReference type="PeptideAtlas" id="Q96KX0"/>
<dbReference type="ProteomicsDB" id="77127"/>
<dbReference type="Antibodypedia" id="29191">
    <property type="antibodies" value="91 antibodies from 19 providers"/>
</dbReference>
<dbReference type="DNASU" id="131375"/>
<dbReference type="Ensembl" id="ENST00000287748.8">
    <property type="protein sequence ID" value="ENSP00000287748.3"/>
    <property type="gene ID" value="ENSG00000157093.9"/>
</dbReference>
<dbReference type="Ensembl" id="ENST00000441172.1">
    <property type="protein sequence ID" value="ENSP00000387897.1"/>
    <property type="gene ID" value="ENSG00000157093.9"/>
</dbReference>
<dbReference type="GeneID" id="131375"/>
<dbReference type="KEGG" id="hsa:131375"/>
<dbReference type="MANE-Select" id="ENST00000287748.8">
    <property type="protein sequence ID" value="ENSP00000287748.3"/>
    <property type="RefSeq nucleotide sequence ID" value="NM_144634.4"/>
    <property type="RefSeq protein sequence ID" value="NP_653235.1"/>
</dbReference>
<dbReference type="UCSC" id="uc003cle.4">
    <property type="organism name" value="human"/>
</dbReference>
<dbReference type="AGR" id="HGNC:28387"/>
<dbReference type="CTD" id="131375"/>
<dbReference type="DisGeNET" id="131375"/>
<dbReference type="GeneCards" id="LYZL4"/>
<dbReference type="HGNC" id="HGNC:28387">
    <property type="gene designation" value="LYZL4"/>
</dbReference>
<dbReference type="HPA" id="ENSG00000157093">
    <property type="expression patterns" value="Tissue enriched (testis)"/>
</dbReference>
<dbReference type="MIM" id="612750">
    <property type="type" value="gene"/>
</dbReference>
<dbReference type="neXtProt" id="NX_Q96KX0"/>
<dbReference type="OpenTargets" id="ENSG00000157093"/>
<dbReference type="PharmGKB" id="PA134911368"/>
<dbReference type="VEuPathDB" id="HostDB:ENSG00000157093"/>
<dbReference type="eggNOG" id="ENOG502SSER">
    <property type="taxonomic scope" value="Eukaryota"/>
</dbReference>
<dbReference type="GeneTree" id="ENSGT00940000162293"/>
<dbReference type="HOGENOM" id="CLU_111620_1_1_1"/>
<dbReference type="InParanoid" id="Q96KX0"/>
<dbReference type="OMA" id="AWPSWSL"/>
<dbReference type="OrthoDB" id="17373at2759"/>
<dbReference type="PAN-GO" id="Q96KX0">
    <property type="GO annotations" value="3 GO annotations based on evolutionary models"/>
</dbReference>
<dbReference type="PhylomeDB" id="Q96KX0"/>
<dbReference type="TreeFam" id="TF324882"/>
<dbReference type="PathwayCommons" id="Q96KX0"/>
<dbReference type="SignaLink" id="Q96KX0"/>
<dbReference type="BioGRID-ORCS" id="131375">
    <property type="hits" value="34 hits in 1137 CRISPR screens"/>
</dbReference>
<dbReference type="GenomeRNAi" id="131375"/>
<dbReference type="Pharos" id="Q96KX0">
    <property type="development level" value="Tbio"/>
</dbReference>
<dbReference type="PRO" id="PR:Q96KX0"/>
<dbReference type="Proteomes" id="UP000005640">
    <property type="component" value="Chromosome 3"/>
</dbReference>
<dbReference type="RNAct" id="Q96KX0">
    <property type="molecule type" value="protein"/>
</dbReference>
<dbReference type="Bgee" id="ENSG00000157093">
    <property type="expression patterns" value="Expressed in sperm and 49 other cell types or tissues"/>
</dbReference>
<dbReference type="ExpressionAtlas" id="Q96KX0">
    <property type="expression patterns" value="baseline and differential"/>
</dbReference>
<dbReference type="GO" id="GO:0001669">
    <property type="term" value="C:acrosomal vesicle"/>
    <property type="evidence" value="ECO:0000250"/>
    <property type="project" value="UniProtKB"/>
</dbReference>
<dbReference type="GO" id="GO:0005615">
    <property type="term" value="C:extracellular space"/>
    <property type="evidence" value="ECO:0000250"/>
    <property type="project" value="UniProtKB"/>
</dbReference>
<dbReference type="GO" id="GO:0005634">
    <property type="term" value="C:nucleus"/>
    <property type="evidence" value="ECO:0007005"/>
    <property type="project" value="UniProtKB"/>
</dbReference>
<dbReference type="GO" id="GO:0036126">
    <property type="term" value="C:sperm flagellum"/>
    <property type="evidence" value="ECO:0000250"/>
    <property type="project" value="UniProtKB"/>
</dbReference>
<dbReference type="GO" id="GO:0003796">
    <property type="term" value="F:lysozyme activity"/>
    <property type="evidence" value="ECO:0007669"/>
    <property type="project" value="InterPro"/>
</dbReference>
<dbReference type="GO" id="GO:0009566">
    <property type="term" value="P:fertilization"/>
    <property type="evidence" value="ECO:0000250"/>
    <property type="project" value="UniProtKB"/>
</dbReference>
<dbReference type="GO" id="GO:0007342">
    <property type="term" value="P:fusion of sperm to egg plasma membrane involved in single fertilization"/>
    <property type="evidence" value="ECO:0000318"/>
    <property type="project" value="GO_Central"/>
</dbReference>
<dbReference type="CDD" id="cd16897">
    <property type="entry name" value="LYZ_C"/>
    <property type="match status" value="1"/>
</dbReference>
<dbReference type="FunFam" id="1.10.530.10:FF:000001">
    <property type="entry name" value="Lysozyme C"/>
    <property type="match status" value="1"/>
</dbReference>
<dbReference type="Gene3D" id="1.10.530.10">
    <property type="match status" value="1"/>
</dbReference>
<dbReference type="InterPro" id="IPR001916">
    <property type="entry name" value="Glyco_hydro_22"/>
</dbReference>
<dbReference type="InterPro" id="IPR019799">
    <property type="entry name" value="Glyco_hydro_22_CS"/>
</dbReference>
<dbReference type="InterPro" id="IPR000974">
    <property type="entry name" value="Glyco_hydro_22_lys"/>
</dbReference>
<dbReference type="InterPro" id="IPR023346">
    <property type="entry name" value="Lysozyme-like_dom_sf"/>
</dbReference>
<dbReference type="PANTHER" id="PTHR11407">
    <property type="entry name" value="LYSOZYME C"/>
    <property type="match status" value="1"/>
</dbReference>
<dbReference type="PANTHER" id="PTHR11407:SF21">
    <property type="entry name" value="LYSOZYME-LIKE PROTEIN 4"/>
    <property type="match status" value="1"/>
</dbReference>
<dbReference type="Pfam" id="PF00062">
    <property type="entry name" value="Lys"/>
    <property type="match status" value="1"/>
</dbReference>
<dbReference type="PRINTS" id="PR00137">
    <property type="entry name" value="LYSOZYME"/>
</dbReference>
<dbReference type="PRINTS" id="PR00135">
    <property type="entry name" value="LYZLACT"/>
</dbReference>
<dbReference type="SMART" id="SM00263">
    <property type="entry name" value="LYZ1"/>
    <property type="match status" value="1"/>
</dbReference>
<dbReference type="SUPFAM" id="SSF53955">
    <property type="entry name" value="Lysozyme-like"/>
    <property type="match status" value="1"/>
</dbReference>
<dbReference type="PROSITE" id="PS00128">
    <property type="entry name" value="GLYCOSYL_HYDROL_F22_1"/>
    <property type="match status" value="1"/>
</dbReference>
<dbReference type="PROSITE" id="PS51348">
    <property type="entry name" value="GLYCOSYL_HYDROL_F22_2"/>
    <property type="match status" value="1"/>
</dbReference>
<organism>
    <name type="scientific">Homo sapiens</name>
    <name type="common">Human</name>
    <dbReference type="NCBI Taxonomy" id="9606"/>
    <lineage>
        <taxon>Eukaryota</taxon>
        <taxon>Metazoa</taxon>
        <taxon>Chordata</taxon>
        <taxon>Craniata</taxon>
        <taxon>Vertebrata</taxon>
        <taxon>Euteleostomi</taxon>
        <taxon>Mammalia</taxon>
        <taxon>Eutheria</taxon>
        <taxon>Euarchontoglires</taxon>
        <taxon>Primates</taxon>
        <taxon>Haplorrhini</taxon>
        <taxon>Catarrhini</taxon>
        <taxon>Hominidae</taxon>
        <taxon>Homo</taxon>
    </lineage>
</organism>